<accession>B7NFD6</accession>
<keyword id="KW-0474">Menaquinone biosynthesis</keyword>
<keyword id="KW-0489">Methyltransferase</keyword>
<keyword id="KW-0949">S-adenosyl-L-methionine</keyword>
<keyword id="KW-0808">Transferase</keyword>
<keyword id="KW-0831">Ubiquinone biosynthesis</keyword>
<organism>
    <name type="scientific">Escherichia coli O17:K52:H18 (strain UMN026 / ExPEC)</name>
    <dbReference type="NCBI Taxonomy" id="585056"/>
    <lineage>
        <taxon>Bacteria</taxon>
        <taxon>Pseudomonadati</taxon>
        <taxon>Pseudomonadota</taxon>
        <taxon>Gammaproteobacteria</taxon>
        <taxon>Enterobacterales</taxon>
        <taxon>Enterobacteriaceae</taxon>
        <taxon>Escherichia</taxon>
    </lineage>
</organism>
<reference key="1">
    <citation type="journal article" date="2009" name="PLoS Genet.">
        <title>Organised genome dynamics in the Escherichia coli species results in highly diverse adaptive paths.</title>
        <authorList>
            <person name="Touchon M."/>
            <person name="Hoede C."/>
            <person name="Tenaillon O."/>
            <person name="Barbe V."/>
            <person name="Baeriswyl S."/>
            <person name="Bidet P."/>
            <person name="Bingen E."/>
            <person name="Bonacorsi S."/>
            <person name="Bouchier C."/>
            <person name="Bouvet O."/>
            <person name="Calteau A."/>
            <person name="Chiapello H."/>
            <person name="Clermont O."/>
            <person name="Cruveiller S."/>
            <person name="Danchin A."/>
            <person name="Diard M."/>
            <person name="Dossat C."/>
            <person name="Karoui M.E."/>
            <person name="Frapy E."/>
            <person name="Garry L."/>
            <person name="Ghigo J.M."/>
            <person name="Gilles A.M."/>
            <person name="Johnson J."/>
            <person name="Le Bouguenec C."/>
            <person name="Lescat M."/>
            <person name="Mangenot S."/>
            <person name="Martinez-Jehanne V."/>
            <person name="Matic I."/>
            <person name="Nassif X."/>
            <person name="Oztas S."/>
            <person name="Petit M.A."/>
            <person name="Pichon C."/>
            <person name="Rouy Z."/>
            <person name="Ruf C.S."/>
            <person name="Schneider D."/>
            <person name="Tourret J."/>
            <person name="Vacherie B."/>
            <person name="Vallenet D."/>
            <person name="Medigue C."/>
            <person name="Rocha E.P.C."/>
            <person name="Denamur E."/>
        </authorList>
    </citation>
    <scope>NUCLEOTIDE SEQUENCE [LARGE SCALE GENOMIC DNA]</scope>
    <source>
        <strain>UMN026 / ExPEC</strain>
    </source>
</reference>
<protein>
    <recommendedName>
        <fullName evidence="1">Ubiquinone/menaquinone biosynthesis C-methyltransferase UbiE</fullName>
        <ecNumber evidence="1">2.1.1.163</ecNumber>
        <ecNumber evidence="1">2.1.1.201</ecNumber>
    </recommendedName>
    <alternativeName>
        <fullName evidence="1">2-methoxy-6-polyprenyl-1,4-benzoquinol methylase</fullName>
    </alternativeName>
    <alternativeName>
        <fullName evidence="1">Demethylmenaquinone methyltransferase</fullName>
    </alternativeName>
</protein>
<name>UBIE_ECOLU</name>
<evidence type="ECO:0000255" key="1">
    <source>
        <dbReference type="HAMAP-Rule" id="MF_01813"/>
    </source>
</evidence>
<comment type="function">
    <text evidence="1">Methyltransferase required for the conversion of demethylmenaquinol (DMKH2) to menaquinol (MKH2) and the conversion of 2-polyprenyl-6-methoxy-1,4-benzoquinol (DDMQH2) to 2-polyprenyl-3-methyl-6-methoxy-1,4-benzoquinol (DMQH2).</text>
</comment>
<comment type="catalytic activity">
    <reaction evidence="1">
        <text>a 2-demethylmenaquinol + S-adenosyl-L-methionine = a menaquinol + S-adenosyl-L-homocysteine + H(+)</text>
        <dbReference type="Rhea" id="RHEA:42640"/>
        <dbReference type="Rhea" id="RHEA-COMP:9539"/>
        <dbReference type="Rhea" id="RHEA-COMP:9563"/>
        <dbReference type="ChEBI" id="CHEBI:15378"/>
        <dbReference type="ChEBI" id="CHEBI:18151"/>
        <dbReference type="ChEBI" id="CHEBI:55437"/>
        <dbReference type="ChEBI" id="CHEBI:57856"/>
        <dbReference type="ChEBI" id="CHEBI:59789"/>
        <dbReference type="EC" id="2.1.1.163"/>
    </reaction>
</comment>
<comment type="catalytic activity">
    <reaction evidence="1">
        <text>a 2-methoxy-6-(all-trans-polyprenyl)benzene-1,4-diol + S-adenosyl-L-methionine = a 5-methoxy-2-methyl-3-(all-trans-polyprenyl)benzene-1,4-diol + S-adenosyl-L-homocysteine + H(+)</text>
        <dbReference type="Rhea" id="RHEA:28286"/>
        <dbReference type="Rhea" id="RHEA-COMP:10858"/>
        <dbReference type="Rhea" id="RHEA-COMP:10859"/>
        <dbReference type="ChEBI" id="CHEBI:15378"/>
        <dbReference type="ChEBI" id="CHEBI:57856"/>
        <dbReference type="ChEBI" id="CHEBI:59789"/>
        <dbReference type="ChEBI" id="CHEBI:84166"/>
        <dbReference type="ChEBI" id="CHEBI:84167"/>
        <dbReference type="EC" id="2.1.1.201"/>
    </reaction>
</comment>
<comment type="pathway">
    <text evidence="1">Quinol/quinone metabolism; menaquinone biosynthesis; menaquinol from 1,4-dihydroxy-2-naphthoate: step 2/2.</text>
</comment>
<comment type="pathway">
    <text evidence="1">Cofactor biosynthesis; ubiquinone biosynthesis.</text>
</comment>
<comment type="similarity">
    <text evidence="1">Belongs to the class I-like SAM-binding methyltransferase superfamily. MenG/UbiE family.</text>
</comment>
<gene>
    <name evidence="1" type="primary">ubiE</name>
    <name type="ordered locus">ECUMN_4359</name>
</gene>
<feature type="chain" id="PRO_1000187762" description="Ubiquinone/menaquinone biosynthesis C-methyltransferase UbiE">
    <location>
        <begin position="1"/>
        <end position="251"/>
    </location>
</feature>
<feature type="binding site" evidence="1">
    <location>
        <position position="74"/>
    </location>
    <ligand>
        <name>S-adenosyl-L-methionine</name>
        <dbReference type="ChEBI" id="CHEBI:59789"/>
    </ligand>
</feature>
<feature type="binding site" evidence="1">
    <location>
        <position position="95"/>
    </location>
    <ligand>
        <name>S-adenosyl-L-methionine</name>
        <dbReference type="ChEBI" id="CHEBI:59789"/>
    </ligand>
</feature>
<feature type="binding site" evidence="1">
    <location>
        <begin position="123"/>
        <end position="124"/>
    </location>
    <ligand>
        <name>S-adenosyl-L-methionine</name>
        <dbReference type="ChEBI" id="CHEBI:59789"/>
    </ligand>
</feature>
<feature type="binding site" evidence="1">
    <location>
        <position position="140"/>
    </location>
    <ligand>
        <name>S-adenosyl-L-methionine</name>
        <dbReference type="ChEBI" id="CHEBI:59789"/>
    </ligand>
</feature>
<proteinExistence type="inferred from homology"/>
<dbReference type="EC" id="2.1.1.163" evidence="1"/>
<dbReference type="EC" id="2.1.1.201" evidence="1"/>
<dbReference type="EMBL" id="CU928163">
    <property type="protein sequence ID" value="CAR15492.1"/>
    <property type="molecule type" value="Genomic_DNA"/>
</dbReference>
<dbReference type="RefSeq" id="WP_000227958.1">
    <property type="nucleotide sequence ID" value="NC_011751.1"/>
</dbReference>
<dbReference type="RefSeq" id="YP_002414985.1">
    <property type="nucleotide sequence ID" value="NC_011751.1"/>
</dbReference>
<dbReference type="SMR" id="B7NFD6"/>
<dbReference type="STRING" id="585056.ECUMN_4359"/>
<dbReference type="GeneID" id="93778102"/>
<dbReference type="KEGG" id="eum:ECUMN_4359"/>
<dbReference type="PATRIC" id="fig|585056.7.peg.4527"/>
<dbReference type="HOGENOM" id="CLU_037990_0_0_6"/>
<dbReference type="UniPathway" id="UPA00079">
    <property type="reaction ID" value="UER00169"/>
</dbReference>
<dbReference type="UniPathway" id="UPA00232"/>
<dbReference type="Proteomes" id="UP000007097">
    <property type="component" value="Chromosome"/>
</dbReference>
<dbReference type="GO" id="GO:0008425">
    <property type="term" value="F:2-methoxy-6-polyprenyl-1,4-benzoquinol methyltransferase activity"/>
    <property type="evidence" value="ECO:0007669"/>
    <property type="project" value="UniProtKB-UniRule"/>
</dbReference>
<dbReference type="GO" id="GO:0043770">
    <property type="term" value="F:demethylmenaquinone methyltransferase activity"/>
    <property type="evidence" value="ECO:0007669"/>
    <property type="project" value="UniProtKB-UniRule"/>
</dbReference>
<dbReference type="GO" id="GO:0009060">
    <property type="term" value="P:aerobic respiration"/>
    <property type="evidence" value="ECO:0007669"/>
    <property type="project" value="UniProtKB-UniRule"/>
</dbReference>
<dbReference type="GO" id="GO:0009234">
    <property type="term" value="P:menaquinone biosynthetic process"/>
    <property type="evidence" value="ECO:0007669"/>
    <property type="project" value="UniProtKB-UniRule"/>
</dbReference>
<dbReference type="GO" id="GO:0032259">
    <property type="term" value="P:methylation"/>
    <property type="evidence" value="ECO:0007669"/>
    <property type="project" value="UniProtKB-KW"/>
</dbReference>
<dbReference type="CDD" id="cd02440">
    <property type="entry name" value="AdoMet_MTases"/>
    <property type="match status" value="1"/>
</dbReference>
<dbReference type="FunFam" id="3.40.50.150:FF:000014">
    <property type="entry name" value="Ubiquinone/menaquinone biosynthesis C-methyltransferase UbiE"/>
    <property type="match status" value="1"/>
</dbReference>
<dbReference type="Gene3D" id="3.40.50.150">
    <property type="entry name" value="Vaccinia Virus protein VP39"/>
    <property type="match status" value="1"/>
</dbReference>
<dbReference type="HAMAP" id="MF_01813">
    <property type="entry name" value="MenG_UbiE_methyltr"/>
    <property type="match status" value="1"/>
</dbReference>
<dbReference type="InterPro" id="IPR029063">
    <property type="entry name" value="SAM-dependent_MTases_sf"/>
</dbReference>
<dbReference type="InterPro" id="IPR004033">
    <property type="entry name" value="UbiE/COQ5_MeTrFase"/>
</dbReference>
<dbReference type="InterPro" id="IPR023576">
    <property type="entry name" value="UbiE/COQ5_MeTrFase_CS"/>
</dbReference>
<dbReference type="NCBIfam" id="TIGR01934">
    <property type="entry name" value="MenG_MenH_UbiE"/>
    <property type="match status" value="1"/>
</dbReference>
<dbReference type="NCBIfam" id="NF001240">
    <property type="entry name" value="PRK00216.1-1"/>
    <property type="match status" value="1"/>
</dbReference>
<dbReference type="NCBIfam" id="NF001242">
    <property type="entry name" value="PRK00216.1-3"/>
    <property type="match status" value="1"/>
</dbReference>
<dbReference type="NCBIfam" id="NF001244">
    <property type="entry name" value="PRK00216.1-5"/>
    <property type="match status" value="1"/>
</dbReference>
<dbReference type="PANTHER" id="PTHR43591:SF24">
    <property type="entry name" value="2-METHOXY-6-POLYPRENYL-1,4-BENZOQUINOL METHYLASE, MITOCHONDRIAL"/>
    <property type="match status" value="1"/>
</dbReference>
<dbReference type="PANTHER" id="PTHR43591">
    <property type="entry name" value="METHYLTRANSFERASE"/>
    <property type="match status" value="1"/>
</dbReference>
<dbReference type="Pfam" id="PF01209">
    <property type="entry name" value="Ubie_methyltran"/>
    <property type="match status" value="1"/>
</dbReference>
<dbReference type="SUPFAM" id="SSF53335">
    <property type="entry name" value="S-adenosyl-L-methionine-dependent methyltransferases"/>
    <property type="match status" value="1"/>
</dbReference>
<dbReference type="PROSITE" id="PS51608">
    <property type="entry name" value="SAM_MT_UBIE"/>
    <property type="match status" value="1"/>
</dbReference>
<dbReference type="PROSITE" id="PS01183">
    <property type="entry name" value="UBIE_1"/>
    <property type="match status" value="1"/>
</dbReference>
<dbReference type="PROSITE" id="PS01184">
    <property type="entry name" value="UBIE_2"/>
    <property type="match status" value="1"/>
</dbReference>
<sequence length="251" mass="28073">MVDKSQETTHFGFQTVAKEQKADMVAHVFHSVASKYDVMNDLMSFGIHRLWKRFTIDCSGVRRGQTVLDLAGGTGDLTAKFSRLVGETGKVVLADINESMLKMGREKLRNIGVIGNVEYVQANAEALPFPDNTFDCITISFGLRNVTDKDKALRSMYRVLKPGGRLLVLEFSKPIIEPLSKAYDAYSFHVLPRIGSLVANDADSYRYLAESIRMHPDQDTLKAMMQDAGFESVDYYNLTAGVVALHRGYKF</sequence>